<sequence>MAKHLFTSESVSEGHPDKIADQISDAVLDAILEQDPKARVACETYVKTGMVLVGGEITTSAWVDIEEITRNTVREIGYVHSDMGFDANSCAVLSAIGKQSPDINQGVDRADPLEQGAGDQGLMFGYATNETDVLMPAPITYAHRLVQRQAEVRKNGTLPWLRPDAKSQVTFQYDDGKIVGIDAVVLSTQHSEEIDQKSLQEAVMEEIIKPILPAEWLTSATTFFINPTGRFVIGGPMGDCGLTGRKIIVDTYGGMARHGGGAFSGKDPSKVDRSAAYAARYVAKNIVAAGLADRCEIQVSYAIGVAEPTSIMVETFGTEKVPSEQLTLLVREFFDLRPYGLIQMLDLLHPIYKETAAYGHFGREHFPWEKTDKAQLLRDAAGLK</sequence>
<feature type="chain" id="PRO_0000241035" description="S-adenosylmethionine synthase">
    <location>
        <begin position="1"/>
        <end position="384"/>
    </location>
</feature>
<feature type="region of interest" description="Flexible loop" evidence="1">
    <location>
        <begin position="99"/>
        <end position="109"/>
    </location>
</feature>
<feature type="binding site" description="in other chain" evidence="1">
    <location>
        <position position="15"/>
    </location>
    <ligand>
        <name>ATP</name>
        <dbReference type="ChEBI" id="CHEBI:30616"/>
        <note>ligand shared between two neighboring subunits</note>
    </ligand>
</feature>
<feature type="binding site" evidence="1">
    <location>
        <position position="17"/>
    </location>
    <ligand>
        <name>Mg(2+)</name>
        <dbReference type="ChEBI" id="CHEBI:18420"/>
    </ligand>
</feature>
<feature type="binding site" evidence="1">
    <location>
        <position position="43"/>
    </location>
    <ligand>
        <name>K(+)</name>
        <dbReference type="ChEBI" id="CHEBI:29103"/>
    </ligand>
</feature>
<feature type="binding site" description="in other chain" evidence="1">
    <location>
        <position position="56"/>
    </location>
    <ligand>
        <name>L-methionine</name>
        <dbReference type="ChEBI" id="CHEBI:57844"/>
        <note>ligand shared between two neighboring subunits</note>
    </ligand>
</feature>
<feature type="binding site" description="in other chain" evidence="1">
    <location>
        <position position="99"/>
    </location>
    <ligand>
        <name>L-methionine</name>
        <dbReference type="ChEBI" id="CHEBI:57844"/>
        <note>ligand shared between two neighboring subunits</note>
    </ligand>
</feature>
<feature type="binding site" description="in other chain" evidence="1">
    <location>
        <begin position="164"/>
        <end position="166"/>
    </location>
    <ligand>
        <name>ATP</name>
        <dbReference type="ChEBI" id="CHEBI:30616"/>
        <note>ligand shared between two neighboring subunits</note>
    </ligand>
</feature>
<feature type="binding site" description="in other chain" evidence="1">
    <location>
        <begin position="230"/>
        <end position="231"/>
    </location>
    <ligand>
        <name>ATP</name>
        <dbReference type="ChEBI" id="CHEBI:30616"/>
        <note>ligand shared between two neighboring subunits</note>
    </ligand>
</feature>
<feature type="binding site" evidence="1">
    <location>
        <position position="239"/>
    </location>
    <ligand>
        <name>ATP</name>
        <dbReference type="ChEBI" id="CHEBI:30616"/>
        <note>ligand shared between two neighboring subunits</note>
    </ligand>
</feature>
<feature type="binding site" evidence="1">
    <location>
        <position position="239"/>
    </location>
    <ligand>
        <name>L-methionine</name>
        <dbReference type="ChEBI" id="CHEBI:57844"/>
        <note>ligand shared between two neighboring subunits</note>
    </ligand>
</feature>
<feature type="binding site" description="in other chain" evidence="1">
    <location>
        <begin position="245"/>
        <end position="246"/>
    </location>
    <ligand>
        <name>ATP</name>
        <dbReference type="ChEBI" id="CHEBI:30616"/>
        <note>ligand shared between two neighboring subunits</note>
    </ligand>
</feature>
<feature type="binding site" evidence="1">
    <location>
        <position position="262"/>
    </location>
    <ligand>
        <name>ATP</name>
        <dbReference type="ChEBI" id="CHEBI:30616"/>
        <note>ligand shared between two neighboring subunits</note>
    </ligand>
</feature>
<feature type="binding site" evidence="1">
    <location>
        <position position="266"/>
    </location>
    <ligand>
        <name>ATP</name>
        <dbReference type="ChEBI" id="CHEBI:30616"/>
        <note>ligand shared between two neighboring subunits</note>
    </ligand>
</feature>
<feature type="binding site" description="in other chain" evidence="1">
    <location>
        <position position="270"/>
    </location>
    <ligand>
        <name>L-methionine</name>
        <dbReference type="ChEBI" id="CHEBI:57844"/>
        <note>ligand shared between two neighboring subunits</note>
    </ligand>
</feature>
<evidence type="ECO:0000255" key="1">
    <source>
        <dbReference type="HAMAP-Rule" id="MF_00086"/>
    </source>
</evidence>
<dbReference type="EC" id="2.5.1.6" evidence="1"/>
<dbReference type="EMBL" id="CP000036">
    <property type="protein sequence ID" value="ABB67554.1"/>
    <property type="molecule type" value="Genomic_DNA"/>
</dbReference>
<dbReference type="RefSeq" id="WP_001062133.1">
    <property type="nucleotide sequence ID" value="NC_007613.1"/>
</dbReference>
<dbReference type="SMR" id="Q31WK4"/>
<dbReference type="KEGG" id="sbo:SBO_3048"/>
<dbReference type="HOGENOM" id="CLU_041802_1_1_6"/>
<dbReference type="UniPathway" id="UPA00315">
    <property type="reaction ID" value="UER00080"/>
</dbReference>
<dbReference type="Proteomes" id="UP000007067">
    <property type="component" value="Chromosome"/>
</dbReference>
<dbReference type="GO" id="GO:0005737">
    <property type="term" value="C:cytoplasm"/>
    <property type="evidence" value="ECO:0007669"/>
    <property type="project" value="UniProtKB-SubCell"/>
</dbReference>
<dbReference type="GO" id="GO:0005524">
    <property type="term" value="F:ATP binding"/>
    <property type="evidence" value="ECO:0007669"/>
    <property type="project" value="UniProtKB-UniRule"/>
</dbReference>
<dbReference type="GO" id="GO:0000287">
    <property type="term" value="F:magnesium ion binding"/>
    <property type="evidence" value="ECO:0007669"/>
    <property type="project" value="UniProtKB-UniRule"/>
</dbReference>
<dbReference type="GO" id="GO:0004478">
    <property type="term" value="F:methionine adenosyltransferase activity"/>
    <property type="evidence" value="ECO:0007669"/>
    <property type="project" value="UniProtKB-UniRule"/>
</dbReference>
<dbReference type="GO" id="GO:0006730">
    <property type="term" value="P:one-carbon metabolic process"/>
    <property type="evidence" value="ECO:0007669"/>
    <property type="project" value="UniProtKB-KW"/>
</dbReference>
<dbReference type="GO" id="GO:0006556">
    <property type="term" value="P:S-adenosylmethionine biosynthetic process"/>
    <property type="evidence" value="ECO:0007669"/>
    <property type="project" value="UniProtKB-UniRule"/>
</dbReference>
<dbReference type="CDD" id="cd18079">
    <property type="entry name" value="S-AdoMet_synt"/>
    <property type="match status" value="1"/>
</dbReference>
<dbReference type="FunFam" id="3.30.300.10:FF:000001">
    <property type="entry name" value="S-adenosylmethionine synthase"/>
    <property type="match status" value="1"/>
</dbReference>
<dbReference type="FunFam" id="3.30.300.10:FF:000003">
    <property type="entry name" value="S-adenosylmethionine synthase"/>
    <property type="match status" value="1"/>
</dbReference>
<dbReference type="Gene3D" id="3.30.300.10">
    <property type="match status" value="3"/>
</dbReference>
<dbReference type="HAMAP" id="MF_00086">
    <property type="entry name" value="S_AdoMet_synth1"/>
    <property type="match status" value="1"/>
</dbReference>
<dbReference type="InterPro" id="IPR022631">
    <property type="entry name" value="ADOMET_SYNTHASE_CS"/>
</dbReference>
<dbReference type="InterPro" id="IPR022630">
    <property type="entry name" value="S-AdoMet_synt_C"/>
</dbReference>
<dbReference type="InterPro" id="IPR022629">
    <property type="entry name" value="S-AdoMet_synt_central"/>
</dbReference>
<dbReference type="InterPro" id="IPR022628">
    <property type="entry name" value="S-AdoMet_synt_N"/>
</dbReference>
<dbReference type="InterPro" id="IPR002133">
    <property type="entry name" value="S-AdoMet_synthetase"/>
</dbReference>
<dbReference type="InterPro" id="IPR022636">
    <property type="entry name" value="S-AdoMet_synthetase_sfam"/>
</dbReference>
<dbReference type="NCBIfam" id="TIGR01034">
    <property type="entry name" value="metK"/>
    <property type="match status" value="1"/>
</dbReference>
<dbReference type="PANTHER" id="PTHR11964">
    <property type="entry name" value="S-ADENOSYLMETHIONINE SYNTHETASE"/>
    <property type="match status" value="1"/>
</dbReference>
<dbReference type="Pfam" id="PF02773">
    <property type="entry name" value="S-AdoMet_synt_C"/>
    <property type="match status" value="1"/>
</dbReference>
<dbReference type="Pfam" id="PF02772">
    <property type="entry name" value="S-AdoMet_synt_M"/>
    <property type="match status" value="1"/>
</dbReference>
<dbReference type="Pfam" id="PF00438">
    <property type="entry name" value="S-AdoMet_synt_N"/>
    <property type="match status" value="1"/>
</dbReference>
<dbReference type="PIRSF" id="PIRSF000497">
    <property type="entry name" value="MAT"/>
    <property type="match status" value="1"/>
</dbReference>
<dbReference type="SUPFAM" id="SSF55973">
    <property type="entry name" value="S-adenosylmethionine synthetase"/>
    <property type="match status" value="3"/>
</dbReference>
<dbReference type="PROSITE" id="PS00376">
    <property type="entry name" value="ADOMET_SYNTHASE_1"/>
    <property type="match status" value="1"/>
</dbReference>
<dbReference type="PROSITE" id="PS00377">
    <property type="entry name" value="ADOMET_SYNTHASE_2"/>
    <property type="match status" value="1"/>
</dbReference>
<proteinExistence type="inferred from homology"/>
<protein>
    <recommendedName>
        <fullName evidence="1">S-adenosylmethionine synthase</fullName>
        <shortName evidence="1">AdoMet synthase</shortName>
        <ecNumber evidence="1">2.5.1.6</ecNumber>
    </recommendedName>
    <alternativeName>
        <fullName evidence="1">MAT</fullName>
    </alternativeName>
    <alternativeName>
        <fullName evidence="1">Methionine adenosyltransferase</fullName>
    </alternativeName>
</protein>
<accession>Q31WK4</accession>
<gene>
    <name evidence="1" type="primary">metK</name>
    <name type="ordered locus">SBO_3048</name>
</gene>
<comment type="function">
    <text evidence="1">Catalyzes the formation of S-adenosylmethionine (AdoMet) from methionine and ATP. The overall synthetic reaction is composed of two sequential steps, AdoMet formation and the subsequent tripolyphosphate hydrolysis which occurs prior to release of AdoMet from the enzyme.</text>
</comment>
<comment type="catalytic activity">
    <reaction evidence="1">
        <text>L-methionine + ATP + H2O = S-adenosyl-L-methionine + phosphate + diphosphate</text>
        <dbReference type="Rhea" id="RHEA:21080"/>
        <dbReference type="ChEBI" id="CHEBI:15377"/>
        <dbReference type="ChEBI" id="CHEBI:30616"/>
        <dbReference type="ChEBI" id="CHEBI:33019"/>
        <dbReference type="ChEBI" id="CHEBI:43474"/>
        <dbReference type="ChEBI" id="CHEBI:57844"/>
        <dbReference type="ChEBI" id="CHEBI:59789"/>
        <dbReference type="EC" id="2.5.1.6"/>
    </reaction>
</comment>
<comment type="cofactor">
    <cofactor evidence="1">
        <name>Mg(2+)</name>
        <dbReference type="ChEBI" id="CHEBI:18420"/>
    </cofactor>
    <text evidence="1">Binds 2 divalent ions per subunit.</text>
</comment>
<comment type="cofactor">
    <cofactor evidence="1">
        <name>K(+)</name>
        <dbReference type="ChEBI" id="CHEBI:29103"/>
    </cofactor>
    <text evidence="1">Binds 1 potassium ion per subunit.</text>
</comment>
<comment type="pathway">
    <text evidence="1">Amino-acid biosynthesis; S-adenosyl-L-methionine biosynthesis; S-adenosyl-L-methionine from L-methionine: step 1/1.</text>
</comment>
<comment type="subunit">
    <text evidence="1">Homotetramer; dimer of dimers.</text>
</comment>
<comment type="subcellular location">
    <subcellularLocation>
        <location evidence="1">Cytoplasm</location>
    </subcellularLocation>
</comment>
<comment type="similarity">
    <text evidence="1">Belongs to the AdoMet synthase family.</text>
</comment>
<keyword id="KW-0067">ATP-binding</keyword>
<keyword id="KW-0963">Cytoplasm</keyword>
<keyword id="KW-0460">Magnesium</keyword>
<keyword id="KW-0479">Metal-binding</keyword>
<keyword id="KW-0547">Nucleotide-binding</keyword>
<keyword id="KW-0554">One-carbon metabolism</keyword>
<keyword id="KW-0630">Potassium</keyword>
<keyword id="KW-0808">Transferase</keyword>
<name>METK_SHIBS</name>
<organism>
    <name type="scientific">Shigella boydii serotype 4 (strain Sb227)</name>
    <dbReference type="NCBI Taxonomy" id="300268"/>
    <lineage>
        <taxon>Bacteria</taxon>
        <taxon>Pseudomonadati</taxon>
        <taxon>Pseudomonadota</taxon>
        <taxon>Gammaproteobacteria</taxon>
        <taxon>Enterobacterales</taxon>
        <taxon>Enterobacteriaceae</taxon>
        <taxon>Shigella</taxon>
    </lineage>
</organism>
<reference key="1">
    <citation type="journal article" date="2005" name="Nucleic Acids Res.">
        <title>Genome dynamics and diversity of Shigella species, the etiologic agents of bacillary dysentery.</title>
        <authorList>
            <person name="Yang F."/>
            <person name="Yang J."/>
            <person name="Zhang X."/>
            <person name="Chen L."/>
            <person name="Jiang Y."/>
            <person name="Yan Y."/>
            <person name="Tang X."/>
            <person name="Wang J."/>
            <person name="Xiong Z."/>
            <person name="Dong J."/>
            <person name="Xue Y."/>
            <person name="Zhu Y."/>
            <person name="Xu X."/>
            <person name="Sun L."/>
            <person name="Chen S."/>
            <person name="Nie H."/>
            <person name="Peng J."/>
            <person name="Xu J."/>
            <person name="Wang Y."/>
            <person name="Yuan Z."/>
            <person name="Wen Y."/>
            <person name="Yao Z."/>
            <person name="Shen Y."/>
            <person name="Qiang B."/>
            <person name="Hou Y."/>
            <person name="Yu J."/>
            <person name="Jin Q."/>
        </authorList>
    </citation>
    <scope>NUCLEOTIDE SEQUENCE [LARGE SCALE GENOMIC DNA]</scope>
    <source>
        <strain>Sb227</strain>
    </source>
</reference>